<comment type="function">
    <text evidence="1">One of the primary rRNA binding proteins. Required for association of the 30S and 50S subunits to form the 70S ribosome, for tRNA binding and peptide bond formation. It has been suggested to have peptidyltransferase activity; this is somewhat controversial. Makes several contacts with the 16S rRNA in the 70S ribosome.</text>
</comment>
<comment type="subunit">
    <text evidence="1">Part of the 50S ribosomal subunit. Forms a bridge to the 30S subunit in the 70S ribosome.</text>
</comment>
<comment type="similarity">
    <text evidence="1">Belongs to the universal ribosomal protein uL2 family.</text>
</comment>
<proteinExistence type="inferred from homology"/>
<sequence>MAIVKCKPTSAGRRHVVKVVNADLHKGKPYAPLLEKNSKNGGRNNNGRITVRHIGGGHKQHYRVVDFKRTKDGIPAKVERLEYDPNRSANIALVLYADGERRYIIAPKGMQAGDVIQSGVDAPIKAGNTLPMRNIPVGSTIHCVELTPGKGAQLARSAGAYAQLVARDGSYVTIRLRSGEMRKVLSEGRATIGEVGNSEHMLRELGKAGASRWRGVRPTVRGVVMNPVDHPHGGGEGRTSGGRHPVSPWGVPTKGYKTRSNKRTDKYIVRRRNK</sequence>
<evidence type="ECO:0000255" key="1">
    <source>
        <dbReference type="HAMAP-Rule" id="MF_01320"/>
    </source>
</evidence>
<evidence type="ECO:0000256" key="2">
    <source>
        <dbReference type="SAM" id="MobiDB-lite"/>
    </source>
</evidence>
<evidence type="ECO:0000305" key="3"/>
<dbReference type="EMBL" id="AE016795">
    <property type="protein sequence ID" value="AAO09267.1"/>
    <property type="molecule type" value="Genomic_DNA"/>
</dbReference>
<dbReference type="RefSeq" id="WP_011078828.1">
    <property type="nucleotide sequence ID" value="NC_004459.3"/>
</dbReference>
<dbReference type="SMR" id="Q8DE42"/>
<dbReference type="KEGG" id="vvu:VV1_0759"/>
<dbReference type="HOGENOM" id="CLU_036235_2_1_6"/>
<dbReference type="Proteomes" id="UP000002275">
    <property type="component" value="Chromosome 1"/>
</dbReference>
<dbReference type="GO" id="GO:0015934">
    <property type="term" value="C:large ribosomal subunit"/>
    <property type="evidence" value="ECO:0007669"/>
    <property type="project" value="InterPro"/>
</dbReference>
<dbReference type="GO" id="GO:0019843">
    <property type="term" value="F:rRNA binding"/>
    <property type="evidence" value="ECO:0007669"/>
    <property type="project" value="UniProtKB-UniRule"/>
</dbReference>
<dbReference type="GO" id="GO:0003735">
    <property type="term" value="F:structural constituent of ribosome"/>
    <property type="evidence" value="ECO:0007669"/>
    <property type="project" value="InterPro"/>
</dbReference>
<dbReference type="GO" id="GO:0016740">
    <property type="term" value="F:transferase activity"/>
    <property type="evidence" value="ECO:0007669"/>
    <property type="project" value="InterPro"/>
</dbReference>
<dbReference type="GO" id="GO:0002181">
    <property type="term" value="P:cytoplasmic translation"/>
    <property type="evidence" value="ECO:0007669"/>
    <property type="project" value="TreeGrafter"/>
</dbReference>
<dbReference type="FunFam" id="2.30.30.30:FF:000001">
    <property type="entry name" value="50S ribosomal protein L2"/>
    <property type="match status" value="1"/>
</dbReference>
<dbReference type="FunFam" id="2.40.50.140:FF:000003">
    <property type="entry name" value="50S ribosomal protein L2"/>
    <property type="match status" value="1"/>
</dbReference>
<dbReference type="FunFam" id="4.10.950.10:FF:000001">
    <property type="entry name" value="50S ribosomal protein L2"/>
    <property type="match status" value="1"/>
</dbReference>
<dbReference type="Gene3D" id="2.30.30.30">
    <property type="match status" value="1"/>
</dbReference>
<dbReference type="Gene3D" id="2.40.50.140">
    <property type="entry name" value="Nucleic acid-binding proteins"/>
    <property type="match status" value="1"/>
</dbReference>
<dbReference type="Gene3D" id="4.10.950.10">
    <property type="entry name" value="Ribosomal protein L2, domain 3"/>
    <property type="match status" value="1"/>
</dbReference>
<dbReference type="HAMAP" id="MF_01320_B">
    <property type="entry name" value="Ribosomal_uL2_B"/>
    <property type="match status" value="1"/>
</dbReference>
<dbReference type="InterPro" id="IPR012340">
    <property type="entry name" value="NA-bd_OB-fold"/>
</dbReference>
<dbReference type="InterPro" id="IPR014722">
    <property type="entry name" value="Rib_uL2_dom2"/>
</dbReference>
<dbReference type="InterPro" id="IPR002171">
    <property type="entry name" value="Ribosomal_uL2"/>
</dbReference>
<dbReference type="InterPro" id="IPR005880">
    <property type="entry name" value="Ribosomal_uL2_bac/org-type"/>
</dbReference>
<dbReference type="InterPro" id="IPR022669">
    <property type="entry name" value="Ribosomal_uL2_C"/>
</dbReference>
<dbReference type="InterPro" id="IPR022671">
    <property type="entry name" value="Ribosomal_uL2_CS"/>
</dbReference>
<dbReference type="InterPro" id="IPR014726">
    <property type="entry name" value="Ribosomal_uL2_dom3"/>
</dbReference>
<dbReference type="InterPro" id="IPR022666">
    <property type="entry name" value="Ribosomal_uL2_RNA-bd_dom"/>
</dbReference>
<dbReference type="InterPro" id="IPR008991">
    <property type="entry name" value="Translation_prot_SH3-like_sf"/>
</dbReference>
<dbReference type="NCBIfam" id="TIGR01171">
    <property type="entry name" value="rplB_bact"/>
    <property type="match status" value="1"/>
</dbReference>
<dbReference type="PANTHER" id="PTHR13691:SF5">
    <property type="entry name" value="LARGE RIBOSOMAL SUBUNIT PROTEIN UL2M"/>
    <property type="match status" value="1"/>
</dbReference>
<dbReference type="PANTHER" id="PTHR13691">
    <property type="entry name" value="RIBOSOMAL PROTEIN L2"/>
    <property type="match status" value="1"/>
</dbReference>
<dbReference type="Pfam" id="PF00181">
    <property type="entry name" value="Ribosomal_L2"/>
    <property type="match status" value="1"/>
</dbReference>
<dbReference type="Pfam" id="PF03947">
    <property type="entry name" value="Ribosomal_L2_C"/>
    <property type="match status" value="1"/>
</dbReference>
<dbReference type="PIRSF" id="PIRSF002158">
    <property type="entry name" value="Ribosomal_L2"/>
    <property type="match status" value="1"/>
</dbReference>
<dbReference type="SMART" id="SM01383">
    <property type="entry name" value="Ribosomal_L2"/>
    <property type="match status" value="1"/>
</dbReference>
<dbReference type="SMART" id="SM01382">
    <property type="entry name" value="Ribosomal_L2_C"/>
    <property type="match status" value="1"/>
</dbReference>
<dbReference type="SUPFAM" id="SSF50249">
    <property type="entry name" value="Nucleic acid-binding proteins"/>
    <property type="match status" value="1"/>
</dbReference>
<dbReference type="SUPFAM" id="SSF50104">
    <property type="entry name" value="Translation proteins SH3-like domain"/>
    <property type="match status" value="1"/>
</dbReference>
<dbReference type="PROSITE" id="PS00467">
    <property type="entry name" value="RIBOSOMAL_L2"/>
    <property type="match status" value="1"/>
</dbReference>
<protein>
    <recommendedName>
        <fullName evidence="1">Large ribosomal subunit protein uL2</fullName>
    </recommendedName>
    <alternativeName>
        <fullName evidence="3">50S ribosomal protein L2</fullName>
    </alternativeName>
</protein>
<organism>
    <name type="scientific">Vibrio vulnificus (strain CMCP6)</name>
    <dbReference type="NCBI Taxonomy" id="216895"/>
    <lineage>
        <taxon>Bacteria</taxon>
        <taxon>Pseudomonadati</taxon>
        <taxon>Pseudomonadota</taxon>
        <taxon>Gammaproteobacteria</taxon>
        <taxon>Vibrionales</taxon>
        <taxon>Vibrionaceae</taxon>
        <taxon>Vibrio</taxon>
    </lineage>
</organism>
<gene>
    <name evidence="1" type="primary">rplB</name>
    <name type="ordered locus">VV1_0759</name>
</gene>
<name>RL2_VIBVU</name>
<keyword id="KW-0687">Ribonucleoprotein</keyword>
<keyword id="KW-0689">Ribosomal protein</keyword>
<keyword id="KW-0694">RNA-binding</keyword>
<keyword id="KW-0699">rRNA-binding</keyword>
<reference key="1">
    <citation type="submission" date="2002-12" db="EMBL/GenBank/DDBJ databases">
        <title>Complete genome sequence of Vibrio vulnificus CMCP6.</title>
        <authorList>
            <person name="Rhee J.H."/>
            <person name="Kim S.Y."/>
            <person name="Chung S.S."/>
            <person name="Kim J.J."/>
            <person name="Moon Y.H."/>
            <person name="Jeong H."/>
            <person name="Choy H.E."/>
        </authorList>
    </citation>
    <scope>NUCLEOTIDE SEQUENCE [LARGE SCALE GENOMIC DNA]</scope>
    <source>
        <strain>CMCP6</strain>
    </source>
</reference>
<accession>Q8DE42</accession>
<feature type="chain" id="PRO_0000129649" description="Large ribosomal subunit protein uL2">
    <location>
        <begin position="1"/>
        <end position="274"/>
    </location>
</feature>
<feature type="region of interest" description="Disordered" evidence="2">
    <location>
        <begin position="223"/>
        <end position="265"/>
    </location>
</feature>